<feature type="signal peptide" evidence="3">
    <location>
        <begin position="1"/>
        <end position="21"/>
    </location>
</feature>
<feature type="chain" id="PRO_0000005105" description="C-X-C motif chemokine 10">
    <location>
        <begin position="22"/>
        <end position="98"/>
    </location>
</feature>
<feature type="modified residue" description="Citrulline" evidence="1">
    <location>
        <position position="26"/>
    </location>
</feature>
<feature type="disulfide bond" evidence="1">
    <location>
        <begin position="30"/>
        <end position="57"/>
    </location>
</feature>
<feature type="disulfide bond" evidence="1">
    <location>
        <begin position="32"/>
        <end position="74"/>
    </location>
</feature>
<feature type="sequence conflict" description="In Ref. 1; AAB60485." evidence="6" ref="1">
    <original>P</original>
    <variation>T</variation>
    <location>
        <position position="39"/>
    </location>
</feature>
<name>CXL10_RAT</name>
<protein>
    <recommendedName>
        <fullName>C-X-C motif chemokine 10</fullName>
    </recommendedName>
    <alternativeName>
        <fullName>10 kDa interferon gamma-induced protein</fullName>
        <shortName>Gamma-IP10</shortName>
        <shortName>IP-10</shortName>
    </alternativeName>
    <alternativeName>
        <fullName>Interferon-inducible protein 10</fullName>
    </alternativeName>
    <alternativeName>
        <fullName>Protein Mob-1</fullName>
    </alternativeName>
    <alternativeName>
        <fullName>Small-inducible cytokine B10</fullName>
    </alternativeName>
</protein>
<reference key="1">
    <citation type="journal article" date="1994" name="Proc. Natl. Acad. Sci. U.S.A.">
        <title>Ras activation of genes: Mob-1 as a model.</title>
        <authorList>
            <person name="Liang P."/>
            <person name="Averboukh L."/>
            <person name="Zhu W."/>
            <person name="Pardee A.B."/>
        </authorList>
    </citation>
    <scope>NUCLEOTIDE SEQUENCE [MRNA]</scope>
</reference>
<reference key="2">
    <citation type="journal article" date="1996" name="J. Biol. Chem.">
        <title>Interferon-inducible protein-10 involves vascular smooth muscle cell migration, proliferation, and inflammatory response.</title>
        <authorList>
            <person name="Wang X."/>
            <person name="Yue T.L."/>
            <person name="Ohlstein E.H."/>
            <person name="Sung C."/>
            <person name="Feuerstein G.Z."/>
        </authorList>
    </citation>
    <scope>NUCLEOTIDE SEQUENCE [MRNA]</scope>
</reference>
<reference key="3">
    <citation type="journal article" date="2004" name="Genome Res.">
        <title>The status, quality, and expansion of the NIH full-length cDNA project: the Mammalian Gene Collection (MGC).</title>
        <authorList>
            <consortium name="The MGC Project Team"/>
        </authorList>
    </citation>
    <scope>NUCLEOTIDE SEQUENCE [LARGE SCALE MRNA]</scope>
    <source>
        <tissue>Pituitary</tissue>
    </source>
</reference>
<reference key="4">
    <citation type="journal article" date="2018" name="Neurosci. Lett.">
        <title>Chemokine CXCL10/CXCR3 signaling contributes to neuropathic pain in spinal cord and dorsal root ganglia after chronic constriction injury in rats.</title>
        <authorList>
            <person name="Chen Y."/>
            <person name="Yin D."/>
            <person name="Fan B."/>
            <person name="Zhu X."/>
            <person name="Chen Q."/>
            <person name="Li Y."/>
            <person name="Zhu S."/>
            <person name="Lu R."/>
            <person name="Xu Z."/>
        </authorList>
    </citation>
    <scope>FUNCTION</scope>
    <scope>TISSUE SPECIFICITY</scope>
</reference>
<reference key="5">
    <citation type="journal article" date="2018" name="Cell. Physiol. Biochem.">
        <title>Elevation of the Chemokine Pair CXCL10/CXCR3 Initiates Sequential Glial Activation and Crosstalk During the Development of Bimodal Inflammatory Pain after Spinal Cord Ischemia Reperfusion.</title>
        <authorList>
            <person name="Yu Q."/>
            <person name="Tian D.L."/>
            <person name="Tian Y."/>
            <person name="Zhao X.T."/>
            <person name="Yang X.Y."/>
        </authorList>
    </citation>
    <scope>FUNCTION</scope>
    <scope>TISSUE SPECIFICITY</scope>
</reference>
<proteinExistence type="evidence at transcript level"/>
<evidence type="ECO:0000250" key="1">
    <source>
        <dbReference type="UniProtKB" id="P02778"/>
    </source>
</evidence>
<evidence type="ECO:0000250" key="2">
    <source>
        <dbReference type="UniProtKB" id="P17515"/>
    </source>
</evidence>
<evidence type="ECO:0000255" key="3"/>
<evidence type="ECO:0000269" key="4">
    <source>
    </source>
</evidence>
<evidence type="ECO:0000269" key="5">
    <source>
    </source>
</evidence>
<evidence type="ECO:0000305" key="6"/>
<accession>P48973</accession>
<accession>P70538</accession>
<accession>Q6GTC7</accession>
<comment type="function">
    <text evidence="1 2 4 5">Pro-inflammatory cytokine that is involved in a wide variety of processes such as chemotaxis, differentiation, and activation of peripheral immune cells, regulation of cell growth, apoptosis and modulation of angiostatic effects (By similarity). Plays thereby an important role during viral infections by stimulating the activation and migration of immune cells to the infected sites (By similarity). Mechanistically, binding of CXCL10 to the CXCR3 receptor activates G protein-mediated signaling and results in downstream activation of phospholipase C-dependent pathway, an increase in intracellular calcium production and actin reorganization. In turn, recruitment of activated Th1 lymphocytes occurs at sites of inflammation (By similarity). Activation of the CXCL10/CXCR3 axis also plays an important role in neurons in response to brain injury for activating microglia, the resident macrophage population of the central nervous system, and directing them to the lesion site. This recruitment is an essential element for neuronal reorganization (By similarity) (PubMed:30257241, PubMed:30448292).</text>
</comment>
<comment type="subunit">
    <text evidence="1">Monomer, dimer, and tetramer. Interacts with CXCR3 (via N-terminus).</text>
</comment>
<comment type="subcellular location">
    <subcellularLocation>
        <location evidence="1">Secreted</location>
    </subcellularLocation>
</comment>
<comment type="tissue specificity">
    <text evidence="4 5">In the central nervous system, CXCL10 is predominantly localized to activated neurons (PubMed:30448292). Expressed in both microglia and astrocytes (PubMed:30257241).</text>
</comment>
<comment type="similarity">
    <text evidence="6">Belongs to the intercrine alpha (chemokine CxC) family.</text>
</comment>
<organism>
    <name type="scientific">Rattus norvegicus</name>
    <name type="common">Rat</name>
    <dbReference type="NCBI Taxonomy" id="10116"/>
    <lineage>
        <taxon>Eukaryota</taxon>
        <taxon>Metazoa</taxon>
        <taxon>Chordata</taxon>
        <taxon>Craniata</taxon>
        <taxon>Vertebrata</taxon>
        <taxon>Euteleostomi</taxon>
        <taxon>Mammalia</taxon>
        <taxon>Eutheria</taxon>
        <taxon>Euarchontoglires</taxon>
        <taxon>Glires</taxon>
        <taxon>Rodentia</taxon>
        <taxon>Myomorpha</taxon>
        <taxon>Muroidea</taxon>
        <taxon>Muridae</taxon>
        <taxon>Murinae</taxon>
        <taxon>Rattus</taxon>
    </lineage>
</organism>
<sequence>MNPSAAVVLCLVLLSLSGTQGIPLARTVRCTCIDFHEQPLRPRAIGKLEIIPASLSCPHVEIIATMKKNNEKRCLNPESEAIKSLLKAVSQRRSKRAP</sequence>
<dbReference type="EMBL" id="U17035">
    <property type="protein sequence ID" value="AAB60485.1"/>
    <property type="molecule type" value="mRNA"/>
</dbReference>
<dbReference type="EMBL" id="U22520">
    <property type="protein sequence ID" value="AAC52811.1"/>
    <property type="molecule type" value="mRNA"/>
</dbReference>
<dbReference type="EMBL" id="BC058444">
    <property type="protein sequence ID" value="AAH58444.1"/>
    <property type="molecule type" value="mRNA"/>
</dbReference>
<dbReference type="RefSeq" id="NP_620789.2">
    <property type="nucleotide sequence ID" value="NM_139089.2"/>
</dbReference>
<dbReference type="SMR" id="P48973"/>
<dbReference type="FunCoup" id="P48973">
    <property type="interactions" value="287"/>
</dbReference>
<dbReference type="STRING" id="10116.ENSRNOP00000003649"/>
<dbReference type="PhosphoSitePlus" id="P48973"/>
<dbReference type="PaxDb" id="10116-ENSRNOP00000003649"/>
<dbReference type="Ensembl" id="ENSRNOT00000003075.8">
    <property type="protein sequence ID" value="ENSRNOP00000003649.4"/>
    <property type="gene ID" value="ENSRNOG00000022256.7"/>
</dbReference>
<dbReference type="GeneID" id="245920"/>
<dbReference type="KEGG" id="rno:245920"/>
<dbReference type="UCSC" id="RGD:620209">
    <property type="organism name" value="rat"/>
</dbReference>
<dbReference type="AGR" id="RGD:620209"/>
<dbReference type="CTD" id="3627"/>
<dbReference type="RGD" id="620209">
    <property type="gene designation" value="Cxcl10"/>
</dbReference>
<dbReference type="eggNOG" id="ENOG502S7MM">
    <property type="taxonomic scope" value="Eukaryota"/>
</dbReference>
<dbReference type="GeneTree" id="ENSGT00940000161759"/>
<dbReference type="HOGENOM" id="CLU_143902_2_2_1"/>
<dbReference type="InParanoid" id="P48973"/>
<dbReference type="OMA" id="RNIRCRC"/>
<dbReference type="OrthoDB" id="9948647at2759"/>
<dbReference type="PhylomeDB" id="P48973"/>
<dbReference type="TreeFam" id="TF333433"/>
<dbReference type="Reactome" id="R-RNO-380108">
    <property type="pathway name" value="Chemokine receptors bind chemokines"/>
</dbReference>
<dbReference type="Reactome" id="R-RNO-418594">
    <property type="pathway name" value="G alpha (i) signalling events"/>
</dbReference>
<dbReference type="PRO" id="PR:P48973"/>
<dbReference type="Proteomes" id="UP000002494">
    <property type="component" value="Chromosome 14"/>
</dbReference>
<dbReference type="Bgee" id="ENSRNOG00000022256">
    <property type="expression patterns" value="Expressed in spleen and 19 other cell types or tissues"/>
</dbReference>
<dbReference type="GO" id="GO:0009897">
    <property type="term" value="C:external side of plasma membrane"/>
    <property type="evidence" value="ECO:0000266"/>
    <property type="project" value="RGD"/>
</dbReference>
<dbReference type="GO" id="GO:0005576">
    <property type="term" value="C:extracellular region"/>
    <property type="evidence" value="ECO:0000266"/>
    <property type="project" value="RGD"/>
</dbReference>
<dbReference type="GO" id="GO:0005615">
    <property type="term" value="C:extracellular space"/>
    <property type="evidence" value="ECO:0000314"/>
    <property type="project" value="RGD"/>
</dbReference>
<dbReference type="GO" id="GO:0042056">
    <property type="term" value="F:chemoattractant activity"/>
    <property type="evidence" value="ECO:0000266"/>
    <property type="project" value="RGD"/>
</dbReference>
<dbReference type="GO" id="GO:0008009">
    <property type="term" value="F:chemokine activity"/>
    <property type="evidence" value="ECO:0000314"/>
    <property type="project" value="RGD"/>
</dbReference>
<dbReference type="GO" id="GO:0045236">
    <property type="term" value="F:CXCR chemokine receptor binding"/>
    <property type="evidence" value="ECO:0000318"/>
    <property type="project" value="GO_Central"/>
</dbReference>
<dbReference type="GO" id="GO:0048248">
    <property type="term" value="F:CXCR3 chemokine receptor binding"/>
    <property type="evidence" value="ECO:0000250"/>
    <property type="project" value="UniProtKB"/>
</dbReference>
<dbReference type="GO" id="GO:0005125">
    <property type="term" value="F:cytokine activity"/>
    <property type="evidence" value="ECO:0000304"/>
    <property type="project" value="RGD"/>
</dbReference>
<dbReference type="GO" id="GO:0008201">
    <property type="term" value="F:heparin binding"/>
    <property type="evidence" value="ECO:0000266"/>
    <property type="project" value="RGD"/>
</dbReference>
<dbReference type="GO" id="GO:0007189">
    <property type="term" value="P:adenylate cyclase-activating G protein-coupled receptor signaling pathway"/>
    <property type="evidence" value="ECO:0000250"/>
    <property type="project" value="UniProtKB"/>
</dbReference>
<dbReference type="GO" id="GO:0140374">
    <property type="term" value="P:antiviral innate immune response"/>
    <property type="evidence" value="ECO:0007669"/>
    <property type="project" value="Ensembl"/>
</dbReference>
<dbReference type="GO" id="GO:0034605">
    <property type="term" value="P:cellular response to heat"/>
    <property type="evidence" value="ECO:0000270"/>
    <property type="project" value="RGD"/>
</dbReference>
<dbReference type="GO" id="GO:0097398">
    <property type="term" value="P:cellular response to interleukin-17"/>
    <property type="evidence" value="ECO:0000266"/>
    <property type="project" value="RGD"/>
</dbReference>
<dbReference type="GO" id="GO:0071222">
    <property type="term" value="P:cellular response to lipopolysaccharide"/>
    <property type="evidence" value="ECO:0000266"/>
    <property type="project" value="RGD"/>
</dbReference>
<dbReference type="GO" id="GO:0098586">
    <property type="term" value="P:cellular response to virus"/>
    <property type="evidence" value="ECO:0007669"/>
    <property type="project" value="Ensembl"/>
</dbReference>
<dbReference type="GO" id="GO:0070098">
    <property type="term" value="P:chemokine-mediated signaling pathway"/>
    <property type="evidence" value="ECO:0000266"/>
    <property type="project" value="RGD"/>
</dbReference>
<dbReference type="GO" id="GO:0006935">
    <property type="term" value="P:chemotaxis"/>
    <property type="evidence" value="ECO:0000250"/>
    <property type="project" value="UniProtKB"/>
</dbReference>
<dbReference type="GO" id="GO:0051607">
    <property type="term" value="P:defense response to virus"/>
    <property type="evidence" value="ECO:0000266"/>
    <property type="project" value="RGD"/>
</dbReference>
<dbReference type="GO" id="GO:0042118">
    <property type="term" value="P:endothelial cell activation"/>
    <property type="evidence" value="ECO:0000266"/>
    <property type="project" value="RGD"/>
</dbReference>
<dbReference type="GO" id="GO:0007186">
    <property type="term" value="P:G protein-coupled receptor signaling pathway"/>
    <property type="evidence" value="ECO:0000250"/>
    <property type="project" value="UniProtKB"/>
</dbReference>
<dbReference type="GO" id="GO:0006955">
    <property type="term" value="P:immune response"/>
    <property type="evidence" value="ECO:0000314"/>
    <property type="project" value="RGD"/>
</dbReference>
<dbReference type="GO" id="GO:0006954">
    <property type="term" value="P:inflammatory response"/>
    <property type="evidence" value="ECO:0000318"/>
    <property type="project" value="GO_Central"/>
</dbReference>
<dbReference type="GO" id="GO:0016525">
    <property type="term" value="P:negative regulation of angiogenesis"/>
    <property type="evidence" value="ECO:0000314"/>
    <property type="project" value="RGD"/>
</dbReference>
<dbReference type="GO" id="GO:0045662">
    <property type="term" value="P:negative regulation of myoblast differentiation"/>
    <property type="evidence" value="ECO:0000266"/>
    <property type="project" value="RGD"/>
</dbReference>
<dbReference type="GO" id="GO:1901740">
    <property type="term" value="P:negative regulation of myoblast fusion"/>
    <property type="evidence" value="ECO:0000266"/>
    <property type="project" value="RGD"/>
</dbReference>
<dbReference type="GO" id="GO:0030593">
    <property type="term" value="P:neutrophil chemotaxis"/>
    <property type="evidence" value="ECO:0000318"/>
    <property type="project" value="GO_Central"/>
</dbReference>
<dbReference type="GO" id="GO:0030335">
    <property type="term" value="P:positive regulation of cell migration"/>
    <property type="evidence" value="ECO:0000314"/>
    <property type="project" value="RGD"/>
</dbReference>
<dbReference type="GO" id="GO:0008284">
    <property type="term" value="P:positive regulation of cell population proliferation"/>
    <property type="evidence" value="ECO:0000314"/>
    <property type="project" value="RGD"/>
</dbReference>
<dbReference type="GO" id="GO:0002690">
    <property type="term" value="P:positive regulation of leukocyte chemotaxis"/>
    <property type="evidence" value="ECO:0000314"/>
    <property type="project" value="RGD"/>
</dbReference>
<dbReference type="GO" id="GO:0090026">
    <property type="term" value="P:positive regulation of monocyte chemotaxis"/>
    <property type="evidence" value="ECO:0000266"/>
    <property type="project" value="RGD"/>
</dbReference>
<dbReference type="GO" id="GO:0051281">
    <property type="term" value="P:positive regulation of release of sequestered calcium ion into cytosol"/>
    <property type="evidence" value="ECO:0000250"/>
    <property type="project" value="UniProtKB"/>
</dbReference>
<dbReference type="GO" id="GO:2000406">
    <property type="term" value="P:positive regulation of T cell migration"/>
    <property type="evidence" value="ECO:0000266"/>
    <property type="project" value="RGD"/>
</dbReference>
<dbReference type="GO" id="GO:0042981">
    <property type="term" value="P:regulation of apoptotic process"/>
    <property type="evidence" value="ECO:0000266"/>
    <property type="project" value="RGD"/>
</dbReference>
<dbReference type="GO" id="GO:0042127">
    <property type="term" value="P:regulation of cell population proliferation"/>
    <property type="evidence" value="ECO:0000250"/>
    <property type="project" value="UniProtKB"/>
</dbReference>
<dbReference type="GO" id="GO:1901509">
    <property type="term" value="P:regulation of endothelial tube morphogenesis"/>
    <property type="evidence" value="ECO:0000266"/>
    <property type="project" value="RGD"/>
</dbReference>
<dbReference type="GO" id="GO:0010819">
    <property type="term" value="P:regulation of T cell chemotaxis"/>
    <property type="evidence" value="ECO:0000266"/>
    <property type="project" value="RGD"/>
</dbReference>
<dbReference type="GO" id="GO:0010996">
    <property type="term" value="P:response to auditory stimulus"/>
    <property type="evidence" value="ECO:0000270"/>
    <property type="project" value="RGD"/>
</dbReference>
<dbReference type="GO" id="GO:0009617">
    <property type="term" value="P:response to bacterium"/>
    <property type="evidence" value="ECO:0000266"/>
    <property type="project" value="RGD"/>
</dbReference>
<dbReference type="GO" id="GO:0010332">
    <property type="term" value="P:response to gamma radiation"/>
    <property type="evidence" value="ECO:0000270"/>
    <property type="project" value="RGD"/>
</dbReference>
<dbReference type="GO" id="GO:0032496">
    <property type="term" value="P:response to lipopolysaccharide"/>
    <property type="evidence" value="ECO:0000270"/>
    <property type="project" value="RGD"/>
</dbReference>
<dbReference type="GO" id="GO:0033280">
    <property type="term" value="P:response to vitamin D"/>
    <property type="evidence" value="ECO:0000270"/>
    <property type="project" value="RGD"/>
</dbReference>
<dbReference type="GO" id="GO:0010818">
    <property type="term" value="P:T cell chemotaxis"/>
    <property type="evidence" value="ECO:0000266"/>
    <property type="project" value="RGD"/>
</dbReference>
<dbReference type="CDD" id="cd00273">
    <property type="entry name" value="Chemokine_CXC"/>
    <property type="match status" value="1"/>
</dbReference>
<dbReference type="FunFam" id="2.40.50.40:FF:000004">
    <property type="entry name" value="C-X-C motif chemokine"/>
    <property type="match status" value="1"/>
</dbReference>
<dbReference type="Gene3D" id="2.40.50.40">
    <property type="match status" value="1"/>
</dbReference>
<dbReference type="InterPro" id="IPR039809">
    <property type="entry name" value="Chemokine_b/g/d"/>
</dbReference>
<dbReference type="InterPro" id="IPR001089">
    <property type="entry name" value="Chemokine_CXC"/>
</dbReference>
<dbReference type="InterPro" id="IPR018048">
    <property type="entry name" value="Chemokine_CXC_CS"/>
</dbReference>
<dbReference type="InterPro" id="IPR001811">
    <property type="entry name" value="Chemokine_IL8-like_dom"/>
</dbReference>
<dbReference type="InterPro" id="IPR033899">
    <property type="entry name" value="CXC_Chemokine_domain"/>
</dbReference>
<dbReference type="InterPro" id="IPR036048">
    <property type="entry name" value="Interleukin_8-like_sf"/>
</dbReference>
<dbReference type="PANTHER" id="PTHR12015:SF188">
    <property type="entry name" value="C-X-C MOTIF CHEMOKINE 10"/>
    <property type="match status" value="1"/>
</dbReference>
<dbReference type="PANTHER" id="PTHR12015">
    <property type="entry name" value="SMALL INDUCIBLE CYTOKINE A"/>
    <property type="match status" value="1"/>
</dbReference>
<dbReference type="Pfam" id="PF00048">
    <property type="entry name" value="IL8"/>
    <property type="match status" value="1"/>
</dbReference>
<dbReference type="PRINTS" id="PR00436">
    <property type="entry name" value="INTERLEUKIN8"/>
</dbReference>
<dbReference type="PRINTS" id="PR00437">
    <property type="entry name" value="SMALLCYTKCXC"/>
</dbReference>
<dbReference type="SMART" id="SM00199">
    <property type="entry name" value="SCY"/>
    <property type="match status" value="1"/>
</dbReference>
<dbReference type="SUPFAM" id="SSF54117">
    <property type="entry name" value="Interleukin 8-like chemokines"/>
    <property type="match status" value="1"/>
</dbReference>
<dbReference type="PROSITE" id="PS00471">
    <property type="entry name" value="SMALL_CYTOKINES_CXC"/>
    <property type="match status" value="1"/>
</dbReference>
<keyword id="KW-0145">Chemotaxis</keyword>
<keyword id="KW-0164">Citrullination</keyword>
<keyword id="KW-0202">Cytokine</keyword>
<keyword id="KW-1015">Disulfide bond</keyword>
<keyword id="KW-0395">Inflammatory response</keyword>
<keyword id="KW-1185">Reference proteome</keyword>
<keyword id="KW-0964">Secreted</keyword>
<keyword id="KW-0732">Signal</keyword>
<gene>
    <name type="primary">Cxcl10</name>
    <name type="synonym">Inp10</name>
    <name type="synonym">Mob1</name>
    <name type="synonym">Scyb10</name>
</gene>